<keyword id="KW-0597">Phosphoprotein</keyword>
<keyword id="KW-1185">Reference proteome</keyword>
<keyword id="KW-0732">Signal</keyword>
<keyword id="KW-0758">Storage protein</keyword>
<name>VITA1_XENLA</name>
<comment type="function">
    <text>Precursor of the major egg-yolk proteins that are sources of nutrients during early development of oviparous organisms.</text>
</comment>
<comment type="tissue specificity">
    <text>Produced by the liver, secreted into the blood and then sequestered by receptor mediated endocytosis into growing oocytes, where it is generally cleaved, giving rise to the respective yolk components.</text>
</comment>
<comment type="induction">
    <text>By steroids (estrogen).</text>
</comment>
<proteinExistence type="evidence at transcript level"/>
<accession>P19009</accession>
<reference key="1">
    <citation type="journal article" date="1984" name="Nucleic Acids Res.">
        <title>Evolution of vitellogenin genes: comparative analysis of the nucleotide sequences downstream of the transcription initiation site of four Xenopus laevis and one chicken gene.</title>
        <authorList>
            <person name="Germond J.-E."/>
            <person name="Walker P."/>
            <person name="ten Heggeler B."/>
            <person name="Brown-Luedi M."/>
            <person name="de Bony E."/>
            <person name="Wahli W."/>
        </authorList>
    </citation>
    <scope>NUCLEOTIDE SEQUENCE [GENOMIC DNA]</scope>
</reference>
<dbReference type="EMBL" id="X01168">
    <property type="protein sequence ID" value="CAA25615.1"/>
    <property type="molecule type" value="Genomic_DNA"/>
</dbReference>
<dbReference type="PIR" id="A23876">
    <property type="entry name" value="A23876"/>
</dbReference>
<dbReference type="SMR" id="P19009"/>
<dbReference type="Proteomes" id="UP000186698">
    <property type="component" value="Unplaced"/>
</dbReference>
<dbReference type="GO" id="GO:0005319">
    <property type="term" value="F:lipid transporter activity"/>
    <property type="evidence" value="ECO:0007669"/>
    <property type="project" value="InterPro"/>
</dbReference>
<dbReference type="GO" id="GO:0045735">
    <property type="term" value="F:nutrient reservoir activity"/>
    <property type="evidence" value="ECO:0007669"/>
    <property type="project" value="UniProtKB-KW"/>
</dbReference>
<dbReference type="GO" id="GO:0071391">
    <property type="term" value="P:cellular response to estrogen stimulus"/>
    <property type="evidence" value="ECO:0007669"/>
    <property type="project" value="TreeGrafter"/>
</dbReference>
<dbReference type="GO" id="GO:0032355">
    <property type="term" value="P:response to estradiol"/>
    <property type="evidence" value="ECO:0007669"/>
    <property type="project" value="TreeGrafter"/>
</dbReference>
<dbReference type="Gene3D" id="2.30.230.10">
    <property type="entry name" value="Lipovitellin, beta-sheet shell regions, chain A"/>
    <property type="match status" value="1"/>
</dbReference>
<dbReference type="InterPro" id="IPR015819">
    <property type="entry name" value="Lipid_transp_b-sht_shell"/>
</dbReference>
<dbReference type="InterPro" id="IPR015816">
    <property type="entry name" value="Vitellinogen_b-sht_N"/>
</dbReference>
<dbReference type="InterPro" id="IPR050733">
    <property type="entry name" value="Vitellogenin/Apolipophorin"/>
</dbReference>
<dbReference type="InterPro" id="IPR001747">
    <property type="entry name" value="Vitellogenin_N"/>
</dbReference>
<dbReference type="PANTHER" id="PTHR23345:SF15">
    <property type="entry name" value="VITELLOGENIN 1-RELATED"/>
    <property type="match status" value="1"/>
</dbReference>
<dbReference type="PANTHER" id="PTHR23345">
    <property type="entry name" value="VITELLOGENIN-RELATED"/>
    <property type="match status" value="1"/>
</dbReference>
<dbReference type="Pfam" id="PF01347">
    <property type="entry name" value="Vitellogenin_N"/>
    <property type="match status" value="1"/>
</dbReference>
<dbReference type="SUPFAM" id="SSF56968">
    <property type="entry name" value="Lipovitellin-phosvitin complex, beta-sheet shell regions"/>
    <property type="match status" value="1"/>
</dbReference>
<sequence length="71" mass="7827">MRGIILALLLAIAGSERTQIEPVFSESKTSVYNYEAVILNGFPESGLSRAGIKINCKVEISAYAQRSYFLK</sequence>
<protein>
    <recommendedName>
        <fullName>Vitellogenin-A1</fullName>
        <shortName>VTG A1</shortName>
    </recommendedName>
</protein>
<organism>
    <name type="scientific">Xenopus laevis</name>
    <name type="common">African clawed frog</name>
    <dbReference type="NCBI Taxonomy" id="8355"/>
    <lineage>
        <taxon>Eukaryota</taxon>
        <taxon>Metazoa</taxon>
        <taxon>Chordata</taxon>
        <taxon>Craniata</taxon>
        <taxon>Vertebrata</taxon>
        <taxon>Euteleostomi</taxon>
        <taxon>Amphibia</taxon>
        <taxon>Batrachia</taxon>
        <taxon>Anura</taxon>
        <taxon>Pipoidea</taxon>
        <taxon>Pipidae</taxon>
        <taxon>Xenopodinae</taxon>
        <taxon>Xenopus</taxon>
        <taxon>Xenopus</taxon>
    </lineage>
</organism>
<evidence type="ECO:0000255" key="1">
    <source>
        <dbReference type="PROSITE-ProRule" id="PRU00557"/>
    </source>
</evidence>
<feature type="signal peptide">
    <location>
        <begin position="1"/>
        <end position="15"/>
    </location>
</feature>
<feature type="chain" id="PRO_0000041584" description="Vitellogenin-A1">
    <location>
        <begin position="16"/>
        <end position="71" status="greater than"/>
    </location>
</feature>
<feature type="domain" description="Vitellogenin" evidence="1">
    <location>
        <begin position="24"/>
        <end position="71" status="greater than"/>
    </location>
</feature>
<feature type="non-terminal residue">
    <location>
        <position position="71"/>
    </location>
</feature>